<organism>
    <name type="scientific">Shigella flexneri</name>
    <dbReference type="NCBI Taxonomy" id="623"/>
    <lineage>
        <taxon>Bacteria</taxon>
        <taxon>Pseudomonadati</taxon>
        <taxon>Pseudomonadota</taxon>
        <taxon>Gammaproteobacteria</taxon>
        <taxon>Enterobacterales</taxon>
        <taxon>Enterobacteriaceae</taxon>
        <taxon>Shigella</taxon>
    </lineage>
</organism>
<feature type="chain" id="PRO_0000169244" description="Uncharacterized protein YfgG">
    <location>
        <begin position="1"/>
        <end position="63"/>
    </location>
</feature>
<feature type="transmembrane region" description="Helical" evidence="1">
    <location>
        <begin position="20"/>
        <end position="40"/>
    </location>
</feature>
<reference key="1">
    <citation type="journal article" date="2002" name="Nucleic Acids Res.">
        <title>Genome sequence of Shigella flexneri 2a: insights into pathogenicity through comparison with genomes of Escherichia coli K12 and O157.</title>
        <authorList>
            <person name="Jin Q."/>
            <person name="Yuan Z."/>
            <person name="Xu J."/>
            <person name="Wang Y."/>
            <person name="Shen Y."/>
            <person name="Lu W."/>
            <person name="Wang J."/>
            <person name="Liu H."/>
            <person name="Yang J."/>
            <person name="Yang F."/>
            <person name="Zhang X."/>
            <person name="Zhang J."/>
            <person name="Yang G."/>
            <person name="Wu H."/>
            <person name="Qu D."/>
            <person name="Dong J."/>
            <person name="Sun L."/>
            <person name="Xue Y."/>
            <person name="Zhao A."/>
            <person name="Gao Y."/>
            <person name="Zhu J."/>
            <person name="Kan B."/>
            <person name="Ding K."/>
            <person name="Chen S."/>
            <person name="Cheng H."/>
            <person name="Yao Z."/>
            <person name="He B."/>
            <person name="Chen R."/>
            <person name="Ma D."/>
            <person name="Qiang B."/>
            <person name="Wen Y."/>
            <person name="Hou Y."/>
            <person name="Yu J."/>
        </authorList>
    </citation>
    <scope>NUCLEOTIDE SEQUENCE [LARGE SCALE GENOMIC DNA]</scope>
    <source>
        <strain>301 / Serotype 2a</strain>
    </source>
</reference>
<reference key="2">
    <citation type="journal article" date="2003" name="Infect. Immun.">
        <title>Complete genome sequence and comparative genomics of Shigella flexneri serotype 2a strain 2457T.</title>
        <authorList>
            <person name="Wei J."/>
            <person name="Goldberg M.B."/>
            <person name="Burland V."/>
            <person name="Venkatesan M.M."/>
            <person name="Deng W."/>
            <person name="Fournier G."/>
            <person name="Mayhew G.F."/>
            <person name="Plunkett G. III"/>
            <person name="Rose D.J."/>
            <person name="Darling A."/>
            <person name="Mau B."/>
            <person name="Perna N.T."/>
            <person name="Payne S.M."/>
            <person name="Runyen-Janecky L.J."/>
            <person name="Zhou S."/>
            <person name="Schwartz D.C."/>
            <person name="Blattner F.R."/>
        </authorList>
    </citation>
    <scope>NUCLEOTIDE SEQUENCE [LARGE SCALE GENOMIC DNA]</scope>
    <source>
        <strain>ATCC 700930 / 2457T / Serotype 2a</strain>
    </source>
</reference>
<proteinExistence type="predicted"/>
<protein>
    <recommendedName>
        <fullName>Uncharacterized protein YfgG</fullName>
    </recommendedName>
</protein>
<sequence>MSQATSMRKRHRFNSRMTRIVLLISFIFFFGRFIYSSVGAWQHHQSKKEAQQSTLSVESPVQR</sequence>
<evidence type="ECO:0000255" key="1"/>
<evidence type="ECO:0000305" key="2"/>
<gene>
    <name type="primary">yfgG</name>
    <name type="ordered locus">SF2550</name>
    <name type="ordered locus">S2700</name>
</gene>
<keyword id="KW-0472">Membrane</keyword>
<keyword id="KW-1185">Reference proteome</keyword>
<keyword id="KW-0812">Transmembrane</keyword>
<keyword id="KW-1133">Transmembrane helix</keyword>
<comment type="subcellular location">
    <subcellularLocation>
        <location evidence="2">Membrane</location>
        <topology evidence="2">Single-pass membrane protein</topology>
    </subcellularLocation>
</comment>
<name>YFGG_SHIFL</name>
<dbReference type="EMBL" id="AE005674">
    <property type="protein sequence ID" value="AAN44050.1"/>
    <property type="molecule type" value="Genomic_DNA"/>
</dbReference>
<dbReference type="EMBL" id="AE014073">
    <property type="protein sequence ID" value="AAP17860.1"/>
    <property type="molecule type" value="Genomic_DNA"/>
</dbReference>
<dbReference type="RefSeq" id="NP_708343.1">
    <property type="nucleotide sequence ID" value="NC_004337.2"/>
</dbReference>
<dbReference type="RefSeq" id="WP_000076001.1">
    <property type="nucleotide sequence ID" value="NZ_WPGW01000078.1"/>
</dbReference>
<dbReference type="SMR" id="P64547"/>
<dbReference type="PaxDb" id="198214-SF2550"/>
<dbReference type="GeneID" id="1025611"/>
<dbReference type="KEGG" id="sfl:SF2550"/>
<dbReference type="KEGG" id="sfx:S2700"/>
<dbReference type="PATRIC" id="fig|198214.7.peg.3048"/>
<dbReference type="HOGENOM" id="CLU_200567_2_1_6"/>
<dbReference type="Proteomes" id="UP000001006">
    <property type="component" value="Chromosome"/>
</dbReference>
<dbReference type="Proteomes" id="UP000002673">
    <property type="component" value="Chromosome"/>
</dbReference>
<dbReference type="GO" id="GO:0016020">
    <property type="term" value="C:membrane"/>
    <property type="evidence" value="ECO:0007669"/>
    <property type="project" value="UniProtKB-SubCell"/>
</dbReference>
<dbReference type="InterPro" id="IPR022576">
    <property type="entry name" value="YfgG"/>
</dbReference>
<dbReference type="Pfam" id="PF11119">
    <property type="entry name" value="DUF2633"/>
    <property type="match status" value="1"/>
</dbReference>
<accession>P64547</accession>
<accession>P76571</accession>